<feature type="chain" id="PRO_0000178279" description="Inosine triphosphate pyrophosphatase">
    <location>
        <begin position="1"/>
        <end position="197"/>
    </location>
</feature>
<feature type="binding site" evidence="1">
    <location>
        <begin position="10"/>
        <end position="15"/>
    </location>
    <ligand>
        <name>ITP</name>
        <dbReference type="ChEBI" id="CHEBI:61402"/>
    </ligand>
</feature>
<feature type="binding site" evidence="1">
    <location>
        <position position="45"/>
    </location>
    <ligand>
        <name>Mg(2+)</name>
        <dbReference type="ChEBI" id="CHEBI:18420"/>
    </ligand>
</feature>
<feature type="binding site" evidence="1">
    <location>
        <position position="58"/>
    </location>
    <ligand>
        <name>ITP</name>
        <dbReference type="ChEBI" id="CHEBI:61402"/>
    </ligand>
</feature>
<feature type="binding site" evidence="1">
    <location>
        <begin position="76"/>
        <end position="77"/>
    </location>
    <ligand>
        <name>ITP</name>
        <dbReference type="ChEBI" id="CHEBI:61402"/>
    </ligand>
</feature>
<feature type="binding site" evidence="1">
    <location>
        <position position="93"/>
    </location>
    <ligand>
        <name>ITP</name>
        <dbReference type="ChEBI" id="CHEBI:61402"/>
    </ligand>
</feature>
<feature type="binding site" evidence="1">
    <location>
        <begin position="151"/>
        <end position="154"/>
    </location>
    <ligand>
        <name>ITP</name>
        <dbReference type="ChEBI" id="CHEBI:61402"/>
    </ligand>
</feature>
<feature type="binding site" evidence="1">
    <location>
        <position position="175"/>
    </location>
    <ligand>
        <name>ITP</name>
        <dbReference type="ChEBI" id="CHEBI:61402"/>
    </ligand>
</feature>
<feature type="binding site" evidence="1">
    <location>
        <begin position="180"/>
        <end position="181"/>
    </location>
    <ligand>
        <name>ITP</name>
        <dbReference type="ChEBI" id="CHEBI:61402"/>
    </ligand>
</feature>
<protein>
    <recommendedName>
        <fullName evidence="1">Inosine triphosphate pyrophosphatase</fullName>
        <shortName evidence="1">ITPase</shortName>
        <shortName evidence="1">Inosine triphosphatase</shortName>
        <ecNumber evidence="1 4">3.6.1.66</ecNumber>
    </recommendedName>
    <alternativeName>
        <fullName>Hydroxylaminopurine sensitivity protein 1</fullName>
    </alternativeName>
    <alternativeName>
        <fullName evidence="1">Non-canonical purine NTP pyrophosphatase</fullName>
    </alternativeName>
    <alternativeName>
        <fullName evidence="1">Non-standard purine NTP pyrophosphatase</fullName>
    </alternativeName>
    <alternativeName>
        <fullName evidence="1">Nucleoside-triphosphate diphosphatase</fullName>
    </alternativeName>
    <alternativeName>
        <fullName evidence="1">Nucleoside-triphosphate pyrophosphatase</fullName>
        <shortName evidence="1">NTPase</shortName>
    </alternativeName>
    <alternativeName>
        <fullName evidence="1">XTP/dITP diphosphatase</fullName>
    </alternativeName>
</protein>
<accession>P47119</accession>
<accession>D6VWP0</accession>
<gene>
    <name evidence="1" type="primary">HAM1</name>
    <name type="ordered locus">YJR069C</name>
    <name type="ORF">J1811</name>
</gene>
<dbReference type="EC" id="3.6.1.66" evidence="1 4"/>
<dbReference type="EMBL" id="Z49569">
    <property type="protein sequence ID" value="CAA89597.1"/>
    <property type="molecule type" value="Genomic_DNA"/>
</dbReference>
<dbReference type="EMBL" id="L47993">
    <property type="protein sequence ID" value="AAB39295.1"/>
    <property type="molecule type" value="Genomic_DNA"/>
</dbReference>
<dbReference type="EMBL" id="AY557897">
    <property type="protein sequence ID" value="AAS56223.1"/>
    <property type="molecule type" value="Genomic_DNA"/>
</dbReference>
<dbReference type="EMBL" id="BK006943">
    <property type="protein sequence ID" value="DAA08856.1"/>
    <property type="molecule type" value="Genomic_DNA"/>
</dbReference>
<dbReference type="PIR" id="S57088">
    <property type="entry name" value="S57088"/>
</dbReference>
<dbReference type="RefSeq" id="NP_012603.1">
    <property type="nucleotide sequence ID" value="NM_001181727.1"/>
</dbReference>
<dbReference type="SMR" id="P47119"/>
<dbReference type="BioGRID" id="33826">
    <property type="interactions" value="59"/>
</dbReference>
<dbReference type="DIP" id="DIP-5491N"/>
<dbReference type="FunCoup" id="P47119">
    <property type="interactions" value="900"/>
</dbReference>
<dbReference type="IntAct" id="P47119">
    <property type="interactions" value="7"/>
</dbReference>
<dbReference type="MINT" id="P47119"/>
<dbReference type="STRING" id="4932.YJR069C"/>
<dbReference type="iPTMnet" id="P47119"/>
<dbReference type="PaxDb" id="4932-YJR069C"/>
<dbReference type="PeptideAtlas" id="P47119"/>
<dbReference type="EnsemblFungi" id="YJR069C_mRNA">
    <property type="protein sequence ID" value="YJR069C"/>
    <property type="gene ID" value="YJR069C"/>
</dbReference>
<dbReference type="GeneID" id="853532"/>
<dbReference type="KEGG" id="sce:YJR069C"/>
<dbReference type="AGR" id="SGD:S000003830"/>
<dbReference type="SGD" id="S000003830">
    <property type="gene designation" value="HAM1"/>
</dbReference>
<dbReference type="VEuPathDB" id="FungiDB:YJR069C"/>
<dbReference type="eggNOG" id="KOG3222">
    <property type="taxonomic scope" value="Eukaryota"/>
</dbReference>
<dbReference type="GeneTree" id="ENSGT00390000015399"/>
<dbReference type="HOGENOM" id="CLU_082080_1_1_1"/>
<dbReference type="InParanoid" id="P47119"/>
<dbReference type="OMA" id="YDPIFQP"/>
<dbReference type="OrthoDB" id="6288734at2759"/>
<dbReference type="BioCyc" id="YEAST:G3O-31702-MONOMER"/>
<dbReference type="Reactome" id="R-SCE-74259">
    <property type="pathway name" value="Purine catabolism"/>
</dbReference>
<dbReference type="Reactome" id="R-SCE-9755088">
    <property type="pathway name" value="Ribavirin ADME"/>
</dbReference>
<dbReference type="BioGRID-ORCS" id="853532">
    <property type="hits" value="3 hits in 10 CRISPR screens"/>
</dbReference>
<dbReference type="PRO" id="PR:P47119"/>
<dbReference type="Proteomes" id="UP000002311">
    <property type="component" value="Chromosome X"/>
</dbReference>
<dbReference type="RNAct" id="P47119">
    <property type="molecule type" value="protein"/>
</dbReference>
<dbReference type="GO" id="GO:0005737">
    <property type="term" value="C:cytoplasm"/>
    <property type="evidence" value="ECO:0007005"/>
    <property type="project" value="SGD"/>
</dbReference>
<dbReference type="GO" id="GO:0005634">
    <property type="term" value="C:nucleus"/>
    <property type="evidence" value="ECO:0007005"/>
    <property type="project" value="SGD"/>
</dbReference>
<dbReference type="GO" id="GO:0008828">
    <property type="term" value="F:dATP diphosphatase activity"/>
    <property type="evidence" value="ECO:0000314"/>
    <property type="project" value="SGD"/>
</dbReference>
<dbReference type="GO" id="GO:0047840">
    <property type="term" value="F:dCTP diphosphatase activity"/>
    <property type="evidence" value="ECO:0000314"/>
    <property type="project" value="SGD"/>
</dbReference>
<dbReference type="GO" id="GO:0036217">
    <property type="term" value="F:dGTP diphosphatase activity"/>
    <property type="evidence" value="ECO:0000314"/>
    <property type="project" value="SGD"/>
</dbReference>
<dbReference type="GO" id="GO:0035870">
    <property type="term" value="F:dITP diphosphatase activity"/>
    <property type="evidence" value="ECO:0000314"/>
    <property type="project" value="SGD"/>
</dbReference>
<dbReference type="GO" id="GO:0036218">
    <property type="term" value="F:dTTP diphosphatase activity"/>
    <property type="evidence" value="ECO:0000314"/>
    <property type="project" value="SGD"/>
</dbReference>
<dbReference type="GO" id="GO:0004170">
    <property type="term" value="F:dUTP diphosphatase activity"/>
    <property type="evidence" value="ECO:0000314"/>
    <property type="project" value="SGD"/>
</dbReference>
<dbReference type="GO" id="GO:0036219">
    <property type="term" value="F:GTP diphosphatase activity"/>
    <property type="evidence" value="ECO:0000314"/>
    <property type="project" value="SGD"/>
</dbReference>
<dbReference type="GO" id="GO:0036220">
    <property type="term" value="F:ITP diphosphatase activity"/>
    <property type="evidence" value="ECO:0000314"/>
    <property type="project" value="SGD"/>
</dbReference>
<dbReference type="GO" id="GO:0046872">
    <property type="term" value="F:metal ion binding"/>
    <property type="evidence" value="ECO:0007669"/>
    <property type="project" value="UniProtKB-KW"/>
</dbReference>
<dbReference type="GO" id="GO:0047429">
    <property type="term" value="F:nucleoside triphosphate diphosphatase activity"/>
    <property type="evidence" value="ECO:0000318"/>
    <property type="project" value="GO_Central"/>
</dbReference>
<dbReference type="GO" id="GO:0000166">
    <property type="term" value="F:nucleotide binding"/>
    <property type="evidence" value="ECO:0007669"/>
    <property type="project" value="UniProtKB-KW"/>
</dbReference>
<dbReference type="GO" id="GO:0036221">
    <property type="term" value="F:UTP diphosphatase activity"/>
    <property type="evidence" value="ECO:0000314"/>
    <property type="project" value="SGD"/>
</dbReference>
<dbReference type="GO" id="GO:0036222">
    <property type="term" value="F:XTP diphosphatase activity"/>
    <property type="evidence" value="ECO:0000314"/>
    <property type="project" value="SGD"/>
</dbReference>
<dbReference type="GO" id="GO:0009143">
    <property type="term" value="P:nucleoside triphosphate catabolic process"/>
    <property type="evidence" value="ECO:0000318"/>
    <property type="project" value="GO_Central"/>
</dbReference>
<dbReference type="GO" id="GO:0009117">
    <property type="term" value="P:nucleotide metabolic process"/>
    <property type="evidence" value="ECO:0007669"/>
    <property type="project" value="UniProtKB-KW"/>
</dbReference>
<dbReference type="GO" id="GO:0009217">
    <property type="term" value="P:purine deoxyribonucleoside triphosphate catabolic process"/>
    <property type="evidence" value="ECO:0000314"/>
    <property type="project" value="SGD"/>
</dbReference>
<dbReference type="GO" id="GO:0009213">
    <property type="term" value="P:pyrimidine deoxyribonucleoside triphosphate catabolic process"/>
    <property type="evidence" value="ECO:0000314"/>
    <property type="project" value="SGD"/>
</dbReference>
<dbReference type="CDD" id="cd00515">
    <property type="entry name" value="HAM1"/>
    <property type="match status" value="1"/>
</dbReference>
<dbReference type="FunFam" id="3.90.950.10:FF:000009">
    <property type="entry name" value="Inosine triphosphate pyrophosphatase"/>
    <property type="match status" value="1"/>
</dbReference>
<dbReference type="Gene3D" id="3.90.950.10">
    <property type="match status" value="1"/>
</dbReference>
<dbReference type="HAMAP" id="MF_03148">
    <property type="entry name" value="HAM1_NTPase"/>
    <property type="match status" value="1"/>
</dbReference>
<dbReference type="InterPro" id="IPR027502">
    <property type="entry name" value="ITPase"/>
</dbReference>
<dbReference type="InterPro" id="IPR029001">
    <property type="entry name" value="ITPase-like_fam"/>
</dbReference>
<dbReference type="InterPro" id="IPR002637">
    <property type="entry name" value="RdgB/HAM1"/>
</dbReference>
<dbReference type="NCBIfam" id="TIGR00042">
    <property type="entry name" value="RdgB/HAM1 family non-canonical purine NTP pyrophosphatase"/>
    <property type="match status" value="1"/>
</dbReference>
<dbReference type="PANTHER" id="PTHR11067:SF9">
    <property type="entry name" value="INOSINE TRIPHOSPHATE PYROPHOSPHATASE"/>
    <property type="match status" value="1"/>
</dbReference>
<dbReference type="PANTHER" id="PTHR11067">
    <property type="entry name" value="INOSINE TRIPHOSPHATE PYROPHOSPHATASE/HAM1 PROTEIN"/>
    <property type="match status" value="1"/>
</dbReference>
<dbReference type="Pfam" id="PF01725">
    <property type="entry name" value="Ham1p_like"/>
    <property type="match status" value="1"/>
</dbReference>
<dbReference type="SUPFAM" id="SSF52972">
    <property type="entry name" value="ITPase-like"/>
    <property type="match status" value="1"/>
</dbReference>
<comment type="function">
    <text evidence="1 4 5 6">Pyrophosphatase that hydrolyzes the non-canonical purine nucleotides inosine triphosphate (ITP), deoxyinosine triphosphate (dITP) as well as 2'-deoxy-N-6-hydroxylaminopurine triphosphate (dHAPTP) and 5-bromodeoxyuridine 5'-triphosphate (BrdUTP) to their respective monophosphate derivatives. Xanthosine 5'-triphosphate (XTP) is also a potential substrate. The enzyme does not distinguish between the deoxy- and ribose forms. Probably excludes non-canonical purines from RNA and DNA precursor pools, thus preventing their incorporation into RNA and DNA and avoiding chromosomal lesions.</text>
</comment>
<comment type="catalytic activity">
    <reaction evidence="1">
        <text>ITP + H2O = IMP + diphosphate + H(+)</text>
        <dbReference type="Rhea" id="RHEA:29399"/>
        <dbReference type="ChEBI" id="CHEBI:15377"/>
        <dbReference type="ChEBI" id="CHEBI:15378"/>
        <dbReference type="ChEBI" id="CHEBI:33019"/>
        <dbReference type="ChEBI" id="CHEBI:58053"/>
        <dbReference type="ChEBI" id="CHEBI:61402"/>
        <dbReference type="EC" id="3.6.1.66"/>
    </reaction>
    <physiologicalReaction direction="left-to-right" evidence="1">
        <dbReference type="Rhea" id="RHEA:29400"/>
    </physiologicalReaction>
</comment>
<comment type="catalytic activity">
    <reaction evidence="1 4">
        <text>dITP + H2O = dIMP + diphosphate + H(+)</text>
        <dbReference type="Rhea" id="RHEA:28342"/>
        <dbReference type="ChEBI" id="CHEBI:15377"/>
        <dbReference type="ChEBI" id="CHEBI:15378"/>
        <dbReference type="ChEBI" id="CHEBI:33019"/>
        <dbReference type="ChEBI" id="CHEBI:61194"/>
        <dbReference type="ChEBI" id="CHEBI:61382"/>
        <dbReference type="EC" id="3.6.1.66"/>
    </reaction>
    <physiologicalReaction direction="left-to-right" evidence="1 7">
        <dbReference type="Rhea" id="RHEA:28343"/>
    </physiologicalReaction>
</comment>
<comment type="catalytic activity">
    <reaction evidence="1">
        <text>XTP + H2O = XMP + diphosphate + H(+)</text>
        <dbReference type="Rhea" id="RHEA:28610"/>
        <dbReference type="ChEBI" id="CHEBI:15377"/>
        <dbReference type="ChEBI" id="CHEBI:15378"/>
        <dbReference type="ChEBI" id="CHEBI:33019"/>
        <dbReference type="ChEBI" id="CHEBI:57464"/>
        <dbReference type="ChEBI" id="CHEBI:61314"/>
        <dbReference type="EC" id="3.6.1.66"/>
    </reaction>
    <physiologicalReaction direction="left-to-right" evidence="1">
        <dbReference type="Rhea" id="RHEA:28611"/>
    </physiologicalReaction>
</comment>
<comment type="catalytic activity">
    <reaction evidence="4">
        <text>N(6)-hydroxy-dATP + H2O = N(6)-hydroxy-dAMP + diphosphate + H(+)</text>
        <dbReference type="Rhea" id="RHEA:83971"/>
        <dbReference type="ChEBI" id="CHEBI:15377"/>
        <dbReference type="ChEBI" id="CHEBI:15378"/>
        <dbReference type="ChEBI" id="CHEBI:33019"/>
        <dbReference type="ChEBI" id="CHEBI:233529"/>
        <dbReference type="ChEBI" id="CHEBI:233530"/>
    </reaction>
    <physiologicalReaction direction="left-to-right" evidence="7">
        <dbReference type="Rhea" id="RHEA:83972"/>
    </physiologicalReaction>
</comment>
<comment type="cofactor">
    <cofactor evidence="1">
        <name>Mg(2+)</name>
        <dbReference type="ChEBI" id="CHEBI:18420"/>
    </cofactor>
    <cofactor evidence="1">
        <name>Mn(2+)</name>
        <dbReference type="ChEBI" id="CHEBI:29035"/>
    </cofactor>
    <text evidence="1">Binds 1 divalent metal cation per subunit; can use either Mg(2+) or Mn(2+).</text>
</comment>
<comment type="biophysicochemical properties">
    <kinetics>
        <KM evidence="4">13.4 uM for dITP</KM>
        <KM evidence="4">26.9 uM for dHAPTP</KM>
        <KM evidence="4">722 uM for dGTP</KM>
        <text evidence="4">kcat is 33.5 sec(-1) with dITP as substrate (PubMed:17090528). kcat is 23.4 sec(-1) with dHAPTP as substrate (PubMed:17090528). kcat is 20.9 sec(-1) with dGTP as substrate (PubMed:17090528).</text>
    </kinetics>
</comment>
<comment type="subunit">
    <text evidence="1">Homodimer.</text>
</comment>
<comment type="subcellular location">
    <subcellularLocation>
        <location evidence="1 2">Cytoplasm</location>
    </subcellularLocation>
    <subcellularLocation>
        <location evidence="1 2">Nucleus</location>
    </subcellularLocation>
</comment>
<comment type="miscellaneous">
    <text evidence="3">Present with 3490 molecules/cell in log phase SD medium.</text>
</comment>
<comment type="similarity">
    <text evidence="1">Belongs to the HAM1 NTPase family.</text>
</comment>
<reference key="1">
    <citation type="journal article" date="1996" name="Yeast">
        <title>HAM1, the gene controlling 6-N-hydroxylaminopurine sensitivity and mutagenesis in the yeast Saccharomyces cerevisiae.</title>
        <authorList>
            <person name="Noskov V.N."/>
            <person name="Staak K."/>
            <person name="Shcherbakova P.V."/>
            <person name="Kozmin S.G."/>
            <person name="Negishi K."/>
            <person name="Ono B.-C."/>
            <person name="Hayatsu H."/>
            <person name="Pavlov Y.I."/>
        </authorList>
    </citation>
    <scope>NUCLEOTIDE SEQUENCE [GENOMIC DNA]</scope>
</reference>
<reference key="2">
    <citation type="journal article" date="1996" name="Yeast">
        <title>Analysis of a 62 kb DNA sequence of chromosome X reveals 36 open reading frames and a gene cluster with a counterpart on chromosome XI.</title>
        <authorList>
            <person name="Huang M.-E."/>
            <person name="Manus V."/>
            <person name="Chuat J.-C."/>
            <person name="Galibert F."/>
        </authorList>
    </citation>
    <scope>NUCLEOTIDE SEQUENCE [GENOMIC DNA]</scope>
    <source>
        <strain>ATCC 204508 / S288c</strain>
    </source>
</reference>
<reference key="3">
    <citation type="journal article" date="1996" name="EMBO J.">
        <title>Complete nucleotide sequence of Saccharomyces cerevisiae chromosome X.</title>
        <authorList>
            <person name="Galibert F."/>
            <person name="Alexandraki D."/>
            <person name="Baur A."/>
            <person name="Boles E."/>
            <person name="Chalwatzis N."/>
            <person name="Chuat J.-C."/>
            <person name="Coster F."/>
            <person name="Cziepluch C."/>
            <person name="de Haan M."/>
            <person name="Domdey H."/>
            <person name="Durand P."/>
            <person name="Entian K.-D."/>
            <person name="Gatius M."/>
            <person name="Goffeau A."/>
            <person name="Grivell L.A."/>
            <person name="Hennemann A."/>
            <person name="Herbert C.J."/>
            <person name="Heumann K."/>
            <person name="Hilger F."/>
            <person name="Hollenberg C.P."/>
            <person name="Huang M.-E."/>
            <person name="Jacq C."/>
            <person name="Jauniaux J.-C."/>
            <person name="Katsoulou C."/>
            <person name="Kirchrath L."/>
            <person name="Kleine K."/>
            <person name="Kordes E."/>
            <person name="Koetter P."/>
            <person name="Liebl S."/>
            <person name="Louis E.J."/>
            <person name="Manus V."/>
            <person name="Mewes H.-W."/>
            <person name="Miosga T."/>
            <person name="Obermaier B."/>
            <person name="Perea J."/>
            <person name="Pohl T.M."/>
            <person name="Portetelle D."/>
            <person name="Pujol A."/>
            <person name="Purnelle B."/>
            <person name="Ramezani Rad M."/>
            <person name="Rasmussen S.W."/>
            <person name="Rose M."/>
            <person name="Rossau R."/>
            <person name="Schaaff-Gerstenschlaeger I."/>
            <person name="Smits P.H.M."/>
            <person name="Scarcez T."/>
            <person name="Soriano N."/>
            <person name="To Van D."/>
            <person name="Tzermia M."/>
            <person name="Van Broekhoven A."/>
            <person name="Vandenbol M."/>
            <person name="Wedler H."/>
            <person name="von Wettstein D."/>
            <person name="Wambutt R."/>
            <person name="Zagulski M."/>
            <person name="Zollner A."/>
            <person name="Karpfinger-Hartl L."/>
        </authorList>
    </citation>
    <scope>NUCLEOTIDE SEQUENCE [LARGE SCALE GENOMIC DNA]</scope>
    <source>
        <strain>ATCC 204508 / S288c</strain>
    </source>
</reference>
<reference key="4">
    <citation type="journal article" date="2014" name="G3 (Bethesda)">
        <title>The reference genome sequence of Saccharomyces cerevisiae: Then and now.</title>
        <authorList>
            <person name="Engel S.R."/>
            <person name="Dietrich F.S."/>
            <person name="Fisk D.G."/>
            <person name="Binkley G."/>
            <person name="Balakrishnan R."/>
            <person name="Costanzo M.C."/>
            <person name="Dwight S.S."/>
            <person name="Hitz B.C."/>
            <person name="Karra K."/>
            <person name="Nash R.S."/>
            <person name="Weng S."/>
            <person name="Wong E.D."/>
            <person name="Lloyd P."/>
            <person name="Skrzypek M.S."/>
            <person name="Miyasato S.R."/>
            <person name="Simison M."/>
            <person name="Cherry J.M."/>
        </authorList>
    </citation>
    <scope>GENOME REANNOTATION</scope>
    <source>
        <strain>ATCC 204508 / S288c</strain>
    </source>
</reference>
<reference key="5">
    <citation type="journal article" date="2007" name="Genome Res.">
        <title>Approaching a complete repository of sequence-verified protein-encoding clones for Saccharomyces cerevisiae.</title>
        <authorList>
            <person name="Hu Y."/>
            <person name="Rolfs A."/>
            <person name="Bhullar B."/>
            <person name="Murthy T.V.S."/>
            <person name="Zhu C."/>
            <person name="Berger M.F."/>
            <person name="Camargo A.A."/>
            <person name="Kelley F."/>
            <person name="McCarron S."/>
            <person name="Jepson D."/>
            <person name="Richardson A."/>
            <person name="Raphael J."/>
            <person name="Moreira D."/>
            <person name="Taycher E."/>
            <person name="Zuo D."/>
            <person name="Mohr S."/>
            <person name="Kane M.F."/>
            <person name="Williamson J."/>
            <person name="Simpson A.J.G."/>
            <person name="Bulyk M.L."/>
            <person name="Harlow E."/>
            <person name="Marsischky G."/>
            <person name="Kolodner R.D."/>
            <person name="LaBaer J."/>
        </authorList>
    </citation>
    <scope>NUCLEOTIDE SEQUENCE [GENOMIC DNA]</scope>
    <source>
        <strain>ATCC 204508 / S288c</strain>
    </source>
</reference>
<reference key="6">
    <citation type="journal article" date="1998" name="Acta Biochim. Pol.">
        <title>Overexpression of the yeast HAM1 gene prevents 6-N-hydroxylaminopurine mutagenesis in Escherichia coli.</title>
        <authorList>
            <person name="Kozmin S.G."/>
            <person name="Leroy P."/>
            <person name="Pavlov Y.I."/>
        </authorList>
    </citation>
    <scope>FUNCTION</scope>
</reference>
<reference key="7">
    <citation type="journal article" date="2003" name="Nature">
        <title>Global analysis of protein localization in budding yeast.</title>
        <authorList>
            <person name="Huh W.-K."/>
            <person name="Falvo J.V."/>
            <person name="Gerke L.C."/>
            <person name="Carroll A.S."/>
            <person name="Howson R.W."/>
            <person name="Weissman J.S."/>
            <person name="O'Shea E.K."/>
        </authorList>
    </citation>
    <scope>SUBCELLULAR LOCATION [LARGE SCALE ANALYSIS]</scope>
</reference>
<reference key="8">
    <citation type="journal article" date="2003" name="Nature">
        <title>Global analysis of protein expression in yeast.</title>
        <authorList>
            <person name="Ghaemmaghami S."/>
            <person name="Huh W.-K."/>
            <person name="Bower K."/>
            <person name="Howson R.W."/>
            <person name="Belle A."/>
            <person name="Dephoure N."/>
            <person name="O'Shea E.K."/>
            <person name="Weissman J.S."/>
        </authorList>
    </citation>
    <scope>LEVEL OF PROTEIN EXPRESSION [LARGE SCALE ANALYSIS]</scope>
</reference>
<reference key="9">
    <citation type="journal article" date="2007" name="Curr. Genet.">
        <title>Overexpression of HAM1 gene detoxifies 5-bromodeoxyuridine in the yeast Saccharomyces cerevisiae.</title>
        <authorList>
            <person name="Takayama S."/>
            <person name="Fujii M."/>
            <person name="Kurosawa A."/>
            <person name="Adachi N."/>
            <person name="Ayusawa D."/>
        </authorList>
    </citation>
    <scope>FUNCTION</scope>
</reference>
<reference key="10">
    <citation type="journal article" date="2007" name="J. Biol. Chem.">
        <title>Substrate specificity of RdgB protein, a deoxyribonucleoside triphosphate pyrophosphohydrolase.</title>
        <authorList>
            <person name="Burgis N.E."/>
            <person name="Cunningham R.P."/>
        </authorList>
    </citation>
    <scope>SUBSTRATE SPECIFICITY</scope>
    <scope>FUNCTION</scope>
    <scope>CATALYTIC ACTIVITY</scope>
    <scope>BIOPHYSICOCHEMICAL PROPERTIES</scope>
</reference>
<name>ITPA_YEAST</name>
<sequence length="197" mass="22093">MSNNEIVFVTGNANKLKEVQSILTQEVDNNNKTIHLINEALDLEELQDTDLNAIALAKGKQAVAALGKGKPVFVEDTALRFDEFNGLPGAYIKWFLKSMGLEKIVKMLEPFENKNAEAVTTICFADSRGEYHFFQGITRGKIVPSRGPTTFGWDSIFEPFDSHGLTYAEMSKDAKNAISHRGKAFAQFKEYLYQNDF</sequence>
<evidence type="ECO:0000255" key="1">
    <source>
        <dbReference type="HAMAP-Rule" id="MF_03148"/>
    </source>
</evidence>
<evidence type="ECO:0000269" key="2">
    <source>
    </source>
</evidence>
<evidence type="ECO:0000269" key="3">
    <source>
    </source>
</evidence>
<evidence type="ECO:0000269" key="4">
    <source>
    </source>
</evidence>
<evidence type="ECO:0000269" key="5">
    <source>
    </source>
</evidence>
<evidence type="ECO:0000269" key="6">
    <source>
    </source>
</evidence>
<evidence type="ECO:0000305" key="7">
    <source>
    </source>
</evidence>
<organism>
    <name type="scientific">Saccharomyces cerevisiae (strain ATCC 204508 / S288c)</name>
    <name type="common">Baker's yeast</name>
    <dbReference type="NCBI Taxonomy" id="559292"/>
    <lineage>
        <taxon>Eukaryota</taxon>
        <taxon>Fungi</taxon>
        <taxon>Dikarya</taxon>
        <taxon>Ascomycota</taxon>
        <taxon>Saccharomycotina</taxon>
        <taxon>Saccharomycetes</taxon>
        <taxon>Saccharomycetales</taxon>
        <taxon>Saccharomycetaceae</taxon>
        <taxon>Saccharomyces</taxon>
    </lineage>
</organism>
<proteinExistence type="evidence at protein level"/>
<keyword id="KW-0963">Cytoplasm</keyword>
<keyword id="KW-0378">Hydrolase</keyword>
<keyword id="KW-0460">Magnesium</keyword>
<keyword id="KW-0464">Manganese</keyword>
<keyword id="KW-0479">Metal-binding</keyword>
<keyword id="KW-0546">Nucleotide metabolism</keyword>
<keyword id="KW-0547">Nucleotide-binding</keyword>
<keyword id="KW-0539">Nucleus</keyword>
<keyword id="KW-1185">Reference proteome</keyword>